<organism>
    <name type="scientific">Streptococcus pyogenes serotype M18 (strain MGAS8232)</name>
    <dbReference type="NCBI Taxonomy" id="186103"/>
    <lineage>
        <taxon>Bacteria</taxon>
        <taxon>Bacillati</taxon>
        <taxon>Bacillota</taxon>
        <taxon>Bacilli</taxon>
        <taxon>Lactobacillales</taxon>
        <taxon>Streptococcaceae</taxon>
        <taxon>Streptococcus</taxon>
    </lineage>
</organism>
<gene>
    <name evidence="1" type="primary">potA</name>
    <name type="ordered locus">spyM18_1064</name>
</gene>
<dbReference type="EC" id="7.6.2.11" evidence="1"/>
<dbReference type="EMBL" id="AE009949">
    <property type="protein sequence ID" value="AAL97688.1"/>
    <property type="molecule type" value="Genomic_DNA"/>
</dbReference>
<dbReference type="RefSeq" id="WP_010922284.1">
    <property type="nucleotide sequence ID" value="NC_003485.1"/>
</dbReference>
<dbReference type="SMR" id="Q7CN92"/>
<dbReference type="KEGG" id="spm:spyM18_1064"/>
<dbReference type="HOGENOM" id="CLU_000604_1_1_9"/>
<dbReference type="GO" id="GO:0043190">
    <property type="term" value="C:ATP-binding cassette (ABC) transporter complex"/>
    <property type="evidence" value="ECO:0007669"/>
    <property type="project" value="InterPro"/>
</dbReference>
<dbReference type="GO" id="GO:0015417">
    <property type="term" value="F:ABC-type polyamine transporter activity"/>
    <property type="evidence" value="ECO:0007669"/>
    <property type="project" value="UniProtKB-EC"/>
</dbReference>
<dbReference type="GO" id="GO:0005524">
    <property type="term" value="F:ATP binding"/>
    <property type="evidence" value="ECO:0007669"/>
    <property type="project" value="UniProtKB-KW"/>
</dbReference>
<dbReference type="GO" id="GO:0016887">
    <property type="term" value="F:ATP hydrolysis activity"/>
    <property type="evidence" value="ECO:0007669"/>
    <property type="project" value="InterPro"/>
</dbReference>
<dbReference type="FunFam" id="3.40.50.300:FF:000042">
    <property type="entry name" value="Maltose/maltodextrin ABC transporter, ATP-binding protein"/>
    <property type="match status" value="1"/>
</dbReference>
<dbReference type="Gene3D" id="2.40.50.100">
    <property type="match status" value="1"/>
</dbReference>
<dbReference type="Gene3D" id="3.40.50.300">
    <property type="entry name" value="P-loop containing nucleotide triphosphate hydrolases"/>
    <property type="match status" value="1"/>
</dbReference>
<dbReference type="InterPro" id="IPR003593">
    <property type="entry name" value="AAA+_ATPase"/>
</dbReference>
<dbReference type="InterPro" id="IPR050093">
    <property type="entry name" value="ABC_SmlMolc_Importer"/>
</dbReference>
<dbReference type="InterPro" id="IPR003439">
    <property type="entry name" value="ABC_transporter-like_ATP-bd"/>
</dbReference>
<dbReference type="InterPro" id="IPR017871">
    <property type="entry name" value="ABC_transporter-like_CS"/>
</dbReference>
<dbReference type="InterPro" id="IPR008995">
    <property type="entry name" value="Mo/tungstate-bd_C_term_dom"/>
</dbReference>
<dbReference type="InterPro" id="IPR027417">
    <property type="entry name" value="P-loop_NTPase"/>
</dbReference>
<dbReference type="InterPro" id="IPR005893">
    <property type="entry name" value="PotA-like"/>
</dbReference>
<dbReference type="InterPro" id="IPR013611">
    <property type="entry name" value="Transp-assoc_OB_typ2"/>
</dbReference>
<dbReference type="NCBIfam" id="TIGR01187">
    <property type="entry name" value="potA"/>
    <property type="match status" value="1"/>
</dbReference>
<dbReference type="PANTHER" id="PTHR42781">
    <property type="entry name" value="SPERMIDINE/PUTRESCINE IMPORT ATP-BINDING PROTEIN POTA"/>
    <property type="match status" value="1"/>
</dbReference>
<dbReference type="PANTHER" id="PTHR42781:SF4">
    <property type="entry name" value="SPERMIDINE_PUTRESCINE IMPORT ATP-BINDING PROTEIN POTA"/>
    <property type="match status" value="1"/>
</dbReference>
<dbReference type="Pfam" id="PF00005">
    <property type="entry name" value="ABC_tran"/>
    <property type="match status" value="1"/>
</dbReference>
<dbReference type="Pfam" id="PF08402">
    <property type="entry name" value="TOBE_2"/>
    <property type="match status" value="1"/>
</dbReference>
<dbReference type="SMART" id="SM00382">
    <property type="entry name" value="AAA"/>
    <property type="match status" value="1"/>
</dbReference>
<dbReference type="SUPFAM" id="SSF50331">
    <property type="entry name" value="MOP-like"/>
    <property type="match status" value="1"/>
</dbReference>
<dbReference type="SUPFAM" id="SSF52540">
    <property type="entry name" value="P-loop containing nucleoside triphosphate hydrolases"/>
    <property type="match status" value="1"/>
</dbReference>
<dbReference type="PROSITE" id="PS00211">
    <property type="entry name" value="ABC_TRANSPORTER_1"/>
    <property type="match status" value="1"/>
</dbReference>
<dbReference type="PROSITE" id="PS50893">
    <property type="entry name" value="ABC_TRANSPORTER_2"/>
    <property type="match status" value="1"/>
</dbReference>
<dbReference type="PROSITE" id="PS51305">
    <property type="entry name" value="POTA"/>
    <property type="match status" value="1"/>
</dbReference>
<feature type="chain" id="PRO_0000286308" description="Spermidine/putrescine import ATP-binding protein PotA">
    <location>
        <begin position="1"/>
        <end position="384"/>
    </location>
</feature>
<feature type="domain" description="ABC transporter" evidence="1">
    <location>
        <begin position="6"/>
        <end position="238"/>
    </location>
</feature>
<feature type="binding site" evidence="1">
    <location>
        <begin position="40"/>
        <end position="47"/>
    </location>
    <ligand>
        <name>ATP</name>
        <dbReference type="ChEBI" id="CHEBI:30616"/>
    </ligand>
</feature>
<comment type="function">
    <text evidence="1">Part of the ABC transporter complex PotABCD involved in spermidine/putrescine import. Responsible for energy coupling to the transport system.</text>
</comment>
<comment type="catalytic activity">
    <reaction evidence="1">
        <text>ATP + H2O + polyamine-[polyamine-binding protein]Side 1 = ADP + phosphate + polyamineSide 2 + [polyamine-binding protein]Side 1.</text>
        <dbReference type="EC" id="7.6.2.11"/>
    </reaction>
</comment>
<comment type="subunit">
    <text evidence="1">The complex is composed of two ATP-binding proteins (PotA), two transmembrane proteins (PotB and PotC) and a solute-binding protein (PotD).</text>
</comment>
<comment type="subcellular location">
    <subcellularLocation>
        <location evidence="1">Cell membrane</location>
        <topology evidence="1">Peripheral membrane protein</topology>
    </subcellularLocation>
</comment>
<comment type="similarity">
    <text evidence="1">Belongs to the ABC transporter superfamily. Spermidine/putrescine importer (TC 3.A.1.11.1) family.</text>
</comment>
<accession>Q7CN92</accession>
<name>POTA_STRP8</name>
<evidence type="ECO:0000255" key="1">
    <source>
        <dbReference type="HAMAP-Rule" id="MF_01726"/>
    </source>
</evidence>
<keyword id="KW-0067">ATP-binding</keyword>
<keyword id="KW-1003">Cell membrane</keyword>
<keyword id="KW-0472">Membrane</keyword>
<keyword id="KW-0547">Nucleotide-binding</keyword>
<keyword id="KW-1278">Translocase</keyword>
<keyword id="KW-0813">Transport</keyword>
<reference key="1">
    <citation type="journal article" date="2002" name="Proc. Natl. Acad. Sci. U.S.A.">
        <title>Genome sequence and comparative microarray analysis of serotype M18 group A Streptococcus strains associated with acute rheumatic fever outbreaks.</title>
        <authorList>
            <person name="Smoot J.C."/>
            <person name="Barbian K.D."/>
            <person name="Van Gompel J.J."/>
            <person name="Smoot L.M."/>
            <person name="Chaussee M.S."/>
            <person name="Sylva G.L."/>
            <person name="Sturdevant D.E."/>
            <person name="Ricklefs S.M."/>
            <person name="Porcella S.F."/>
            <person name="Parkins L.D."/>
            <person name="Beres S.B."/>
            <person name="Campbell D.S."/>
            <person name="Smith T.M."/>
            <person name="Zhang Q."/>
            <person name="Kapur V."/>
            <person name="Daly J.A."/>
            <person name="Veasy L.G."/>
            <person name="Musser J.M."/>
        </authorList>
    </citation>
    <scope>NUCLEOTIDE SEQUENCE [LARGE SCALE GENOMIC DNA]</scope>
    <source>
        <strain>MGAS8232</strain>
    </source>
</reference>
<proteinExistence type="inferred from homology"/>
<sequence length="384" mass="43822">MTKPIITFNNVSKTFEDSGTQVLKNINFDLEEGKFYTLLGASGSGKSTILNIMAGLLDASSGDIYLDGERINDLPINKRDIHTVFQNYALFPHMTVFENVAFALKLKKVDKKEIAKRVKETLKMVQLEGFENRSIQKLSGGQRQRVAIARAIINQPRVVLLDEPLSALDLKLRTEMQYELRELQQRLGITFVFVTHDQEEALAMSDWIFVMNEGEIVQSGTPVDIYDEPINHFVANFIGESNIINGTMIEDYLVSFNGKEFESVDGGMRPNEPVEVVIRPEDLQITLPEEGKLQVKVDTQLFRGVHYEIIAYDELGNEWMIHSTRKAIEGEVIGLDFTPEDLHIMRLNETEEEFDARIEEYVEMDEPEDGLINAIEEERNEENL</sequence>
<protein>
    <recommendedName>
        <fullName evidence="1">Spermidine/putrescine import ATP-binding protein PotA</fullName>
        <ecNumber evidence="1">7.6.2.11</ecNumber>
    </recommendedName>
</protein>